<comment type="function">
    <text evidence="1">Endonuclease that specifically degrades the RNA of RNA-DNA hybrids.</text>
</comment>
<comment type="catalytic activity">
    <reaction evidence="1">
        <text>Endonucleolytic cleavage to 5'-phosphomonoester.</text>
        <dbReference type="EC" id="3.1.26.4"/>
    </reaction>
</comment>
<comment type="cofactor">
    <cofactor evidence="1">
        <name>Mn(2+)</name>
        <dbReference type="ChEBI" id="CHEBI:29035"/>
    </cofactor>
    <cofactor evidence="1">
        <name>Mg(2+)</name>
        <dbReference type="ChEBI" id="CHEBI:18420"/>
    </cofactor>
    <text evidence="1">Manganese or magnesium. Binds 1 divalent metal ion per monomer in the absence of substrate. May bind a second metal ion after substrate binding.</text>
</comment>
<comment type="subcellular location">
    <subcellularLocation>
        <location evidence="1">Cytoplasm</location>
    </subcellularLocation>
</comment>
<comment type="similarity">
    <text evidence="1">Belongs to the RNase HII family.</text>
</comment>
<comment type="sequence caution" evidence="4">
    <conflict type="erroneous initiation">
        <sequence resource="EMBL-CDS" id="ABS24518"/>
    </conflict>
</comment>
<evidence type="ECO:0000255" key="1">
    <source>
        <dbReference type="HAMAP-Rule" id="MF_00052"/>
    </source>
</evidence>
<evidence type="ECO:0000255" key="2">
    <source>
        <dbReference type="PROSITE-ProRule" id="PRU01319"/>
    </source>
</evidence>
<evidence type="ECO:0000256" key="3">
    <source>
        <dbReference type="SAM" id="MobiDB-lite"/>
    </source>
</evidence>
<evidence type="ECO:0000305" key="4"/>
<reference key="1">
    <citation type="journal article" date="2015" name="Genome Announc.">
        <title>Complete genome sequence of Anaeromyxobacter sp. Fw109-5, an anaerobic, metal-reducing bacterium isolated from a contaminated subsurface environment.</title>
        <authorList>
            <person name="Hwang C."/>
            <person name="Copeland A."/>
            <person name="Lucas S."/>
            <person name="Lapidus A."/>
            <person name="Barry K."/>
            <person name="Glavina Del Rio T."/>
            <person name="Dalin E."/>
            <person name="Tice H."/>
            <person name="Pitluck S."/>
            <person name="Sims D."/>
            <person name="Brettin T."/>
            <person name="Bruce D.C."/>
            <person name="Detter J.C."/>
            <person name="Han C.S."/>
            <person name="Schmutz J."/>
            <person name="Larimer F.W."/>
            <person name="Land M.L."/>
            <person name="Hauser L.J."/>
            <person name="Kyrpides N."/>
            <person name="Lykidis A."/>
            <person name="Richardson P."/>
            <person name="Belieav A."/>
            <person name="Sanford R.A."/>
            <person name="Loeffler F.E."/>
            <person name="Fields M.W."/>
        </authorList>
    </citation>
    <scope>NUCLEOTIDE SEQUENCE [LARGE SCALE GENOMIC DNA]</scope>
    <source>
        <strain>Fw109-5</strain>
    </source>
</reference>
<feature type="chain" id="PRO_0000334860" description="Ribonuclease HII">
    <location>
        <begin position="1"/>
        <end position="315"/>
    </location>
</feature>
<feature type="domain" description="RNase H type-2" evidence="2">
    <location>
        <begin position="78"/>
        <end position="267"/>
    </location>
</feature>
<feature type="region of interest" description="Disordered" evidence="3">
    <location>
        <begin position="273"/>
        <end position="292"/>
    </location>
</feature>
<feature type="compositionally biased region" description="Low complexity" evidence="3">
    <location>
        <begin position="278"/>
        <end position="292"/>
    </location>
</feature>
<feature type="binding site" evidence="1">
    <location>
        <position position="84"/>
    </location>
    <ligand>
        <name>a divalent metal cation</name>
        <dbReference type="ChEBI" id="CHEBI:60240"/>
    </ligand>
</feature>
<feature type="binding site" evidence="1">
    <location>
        <position position="85"/>
    </location>
    <ligand>
        <name>a divalent metal cation</name>
        <dbReference type="ChEBI" id="CHEBI:60240"/>
    </ligand>
</feature>
<feature type="binding site" evidence="1">
    <location>
        <position position="176"/>
    </location>
    <ligand>
        <name>a divalent metal cation</name>
        <dbReference type="ChEBI" id="CHEBI:60240"/>
    </ligand>
</feature>
<keyword id="KW-0963">Cytoplasm</keyword>
<keyword id="KW-0255">Endonuclease</keyword>
<keyword id="KW-0378">Hydrolase</keyword>
<keyword id="KW-0464">Manganese</keyword>
<keyword id="KW-0479">Metal-binding</keyword>
<keyword id="KW-0540">Nuclease</keyword>
<keyword id="KW-1185">Reference proteome</keyword>
<gene>
    <name evidence="1" type="primary">rnhB</name>
    <name type="ordered locus">Anae109_0302</name>
</gene>
<sequence length="315" mass="34111">MRPEDLARMSVAELRERFLDRNRALSPECEAALTTDPRAGAREVLRLILKRRHANRAEGQRLRHLLRYEGELWDGGVTLVAGVDEAGMAPLAGPVVAGACILPRDYRPRGIDDSKQLDRRERERLAEDIKANAVCWAVARAEVEEIDRLNIYRAGLLALTRAVQALTPAPGHVLVDARKLPELRLPQTPIIHGDALSLTIAAASILAKTTRDELMGELDALYPGYGFCNHKGYPTAEHFQALERLGACPIHRRSFQPVREALGLAPLQGELFAPPPESAAEPGGEGAIAGIAPGSAPCDVAEPLPARTPASARGI</sequence>
<name>RNH2_ANADF</name>
<organism>
    <name type="scientific">Anaeromyxobacter sp. (strain Fw109-5)</name>
    <dbReference type="NCBI Taxonomy" id="404589"/>
    <lineage>
        <taxon>Bacteria</taxon>
        <taxon>Pseudomonadati</taxon>
        <taxon>Myxococcota</taxon>
        <taxon>Myxococcia</taxon>
        <taxon>Myxococcales</taxon>
        <taxon>Cystobacterineae</taxon>
        <taxon>Anaeromyxobacteraceae</taxon>
        <taxon>Anaeromyxobacter</taxon>
    </lineage>
</organism>
<proteinExistence type="inferred from homology"/>
<protein>
    <recommendedName>
        <fullName evidence="1">Ribonuclease HII</fullName>
        <shortName evidence="1">RNase HII</shortName>
        <ecNumber evidence="1">3.1.26.4</ecNumber>
    </recommendedName>
</protein>
<dbReference type="EC" id="3.1.26.4" evidence="1"/>
<dbReference type="EMBL" id="CP000769">
    <property type="protein sequence ID" value="ABS24518.1"/>
    <property type="status" value="ALT_INIT"/>
    <property type="molecule type" value="Genomic_DNA"/>
</dbReference>
<dbReference type="RefSeq" id="WP_041448046.1">
    <property type="nucleotide sequence ID" value="NC_009675.1"/>
</dbReference>
<dbReference type="SMR" id="A7H722"/>
<dbReference type="STRING" id="404589.Anae109_0302"/>
<dbReference type="KEGG" id="afw:Anae109_0302"/>
<dbReference type="eggNOG" id="COG0164">
    <property type="taxonomic scope" value="Bacteria"/>
</dbReference>
<dbReference type="HOGENOM" id="CLU_036532_2_0_7"/>
<dbReference type="OrthoDB" id="9803420at2"/>
<dbReference type="Proteomes" id="UP000006382">
    <property type="component" value="Chromosome"/>
</dbReference>
<dbReference type="GO" id="GO:0005737">
    <property type="term" value="C:cytoplasm"/>
    <property type="evidence" value="ECO:0007669"/>
    <property type="project" value="UniProtKB-SubCell"/>
</dbReference>
<dbReference type="GO" id="GO:0032299">
    <property type="term" value="C:ribonuclease H2 complex"/>
    <property type="evidence" value="ECO:0007669"/>
    <property type="project" value="TreeGrafter"/>
</dbReference>
<dbReference type="GO" id="GO:0030145">
    <property type="term" value="F:manganese ion binding"/>
    <property type="evidence" value="ECO:0007669"/>
    <property type="project" value="UniProtKB-UniRule"/>
</dbReference>
<dbReference type="GO" id="GO:0003723">
    <property type="term" value="F:RNA binding"/>
    <property type="evidence" value="ECO:0007669"/>
    <property type="project" value="InterPro"/>
</dbReference>
<dbReference type="GO" id="GO:0004523">
    <property type="term" value="F:RNA-DNA hybrid ribonuclease activity"/>
    <property type="evidence" value="ECO:0007669"/>
    <property type="project" value="UniProtKB-UniRule"/>
</dbReference>
<dbReference type="GO" id="GO:0043137">
    <property type="term" value="P:DNA replication, removal of RNA primer"/>
    <property type="evidence" value="ECO:0007669"/>
    <property type="project" value="TreeGrafter"/>
</dbReference>
<dbReference type="GO" id="GO:0006298">
    <property type="term" value="P:mismatch repair"/>
    <property type="evidence" value="ECO:0007669"/>
    <property type="project" value="TreeGrafter"/>
</dbReference>
<dbReference type="CDD" id="cd07182">
    <property type="entry name" value="RNase_HII_bacteria_HII_like"/>
    <property type="match status" value="1"/>
</dbReference>
<dbReference type="FunFam" id="3.30.420.10:FF:000006">
    <property type="entry name" value="Ribonuclease HII"/>
    <property type="match status" value="1"/>
</dbReference>
<dbReference type="Gene3D" id="3.30.420.10">
    <property type="entry name" value="Ribonuclease H-like superfamily/Ribonuclease H"/>
    <property type="match status" value="1"/>
</dbReference>
<dbReference type="HAMAP" id="MF_00052_B">
    <property type="entry name" value="RNase_HII_B"/>
    <property type="match status" value="1"/>
</dbReference>
<dbReference type="InterPro" id="IPR022898">
    <property type="entry name" value="RNase_HII"/>
</dbReference>
<dbReference type="InterPro" id="IPR001352">
    <property type="entry name" value="RNase_HII/HIII"/>
</dbReference>
<dbReference type="InterPro" id="IPR024567">
    <property type="entry name" value="RNase_HII/HIII_dom"/>
</dbReference>
<dbReference type="InterPro" id="IPR012337">
    <property type="entry name" value="RNaseH-like_sf"/>
</dbReference>
<dbReference type="InterPro" id="IPR036397">
    <property type="entry name" value="RNaseH_sf"/>
</dbReference>
<dbReference type="NCBIfam" id="NF000594">
    <property type="entry name" value="PRK00015.1-1"/>
    <property type="match status" value="1"/>
</dbReference>
<dbReference type="NCBIfam" id="NF000595">
    <property type="entry name" value="PRK00015.1-3"/>
    <property type="match status" value="1"/>
</dbReference>
<dbReference type="PANTHER" id="PTHR10954">
    <property type="entry name" value="RIBONUCLEASE H2 SUBUNIT A"/>
    <property type="match status" value="1"/>
</dbReference>
<dbReference type="PANTHER" id="PTHR10954:SF18">
    <property type="entry name" value="RIBONUCLEASE HII"/>
    <property type="match status" value="1"/>
</dbReference>
<dbReference type="Pfam" id="PF01351">
    <property type="entry name" value="RNase_HII"/>
    <property type="match status" value="1"/>
</dbReference>
<dbReference type="SUPFAM" id="SSF53098">
    <property type="entry name" value="Ribonuclease H-like"/>
    <property type="match status" value="1"/>
</dbReference>
<dbReference type="PROSITE" id="PS51975">
    <property type="entry name" value="RNASE_H_2"/>
    <property type="match status" value="1"/>
</dbReference>
<accession>A7H722</accession>